<organismHost>
    <name type="scientific">Homo sapiens</name>
    <name type="common">Human</name>
    <dbReference type="NCBI Taxonomy" id="9606"/>
</organismHost>
<comment type="function">
    <text evidence="1">Factor of infectivity and pathogenicity, required for optimal virus replication. Alters numerous pathways of T-lymphocyte function and down-regulates immunity surface molecules in order to evade host defense and increase viral infectivity. Alters the functionality of other immunity cells, like dendritic cells, monocytes/macrophages and NK cells.</text>
</comment>
<comment type="function">
    <text evidence="1">In infected CD4(+) T-lymphocytes, down-regulates the surface MHC-I, mature MHC-II, CD4, CD28, CCR5 and CXCR4 molecules. Mediates internalization and degradation of host CD4 through the interaction of with the cytoplasmic tail of CD4, the recruitment of AP-2 (clathrin adapter protein complex 2), internalization through clathrin coated pits, and subsequent transport to endosomes and lysosomes for degradation. Diverts host MHC-I molecules to the trans-Golgi network-associated endosomal compartments by an endocytic pathway to finally target them for degradation. MHC-I down-regulation may involve AP-1 (clathrin adapter protein complex 1) or possibly Src family kinase-ZAP70/Syk-PI3K cascade recruited by PACS2. In consequence infected cells are masked for immune recognition by cytotoxic T-lymphocytes. Decreasing the number of immune receptors also prevents reinfection by more HIV particles (superinfection). Down-regulates host SERINC3 and SERINC5 thereby excluding these proteins from the viral particles. Virion infectivity is drastically higher when SERINC3 or SERINC5 are excluded from the viral envelope, because these host antiviral proteins impair the membrane fusion event necessary for subsequent virion penetration.</text>
</comment>
<comment type="function">
    <text evidence="1">Bypasses host T-cell signaling by inducing a transcriptional program nearly identical to that of anti-CD3 cell activation. Interaction with TCR-zeta chain up-regulates the Fas ligand (FasL). Increasing surface FasL molecules and decreasing surface MHC-I molecules on infected CD4(+) cells send attacking cytotoxic CD8+ T-lymphocytes into apoptosis.</text>
</comment>
<comment type="function">
    <text evidence="1">Plays a role in optimizing the host cell environment for viral replication without causing cell death by apoptosis. Protects the infected cells from apoptosis in order to keep them alive until the next virus generation is ready to strike. Inhibits the Fas and TNFR-mediated death signals by blocking MAP3K5/ASK1. Decreases the half-life of TP53, protecting the infected cell against p53-mediated apoptosis. Inhibits the apoptotic signals regulated by the Bcl-2 family proteins through the formation of a Nef/PI3-kinase/PAK2 complex that leads to activation of PAK2 and induces phosphorylation of host BAD.</text>
</comment>
<comment type="function">
    <text evidence="1">Extracellular Nef protein targets CD4(+) T-lymphocytes for apoptosis by interacting with CXCR4 surface receptors.</text>
</comment>
<comment type="subunit">
    <text evidence="1">Monomer; cytosolic form. Homodimer; membrane bound form. Interacts with Nef associated p21-activated kinase (PAK2); this interaction activates PAK2. Associates with the Nef-MHC-I-AP1 complex; this complex is required for MHC-I internalization. Interacts (via C-terminus) with host PI3-kinase. Interacts with host PACS1; this interaction seems to be weak. Interacts with host PACS2. Interacts with host LCK and MAPK3; these interactions inhibit the kinase activity of the latter. Interacts with host ATP6V1H; this interaction may play a role in CD4 endocytosis. Associates with the CD4-Nef-AP2 complex; this complex is required for CD4 internalization. Interacts with host AP2 subunit alpha and AP2 subunit sigma2. Interacts with TCR-zeta chain; this interaction up-regulates the Fas ligand (FasL) surface expression. Interacts with host HCK, LYN, and SRC; these interactions activate the Src family kinases. Interacts with MAP3K5; this interaction inhibits the Fas and TNFR-mediated death signals. Interacts with beta-COP and PTE1. Interacts with human RACK1; this increases Nef phosphorylation by PKC. Interacts with TP53; this interaction decreases the half-life of TP53, protecting the infected cell against p53-mediated apoptosis.</text>
</comment>
<comment type="subcellular location">
    <subcellularLocation>
        <location evidence="1">Host cell membrane</location>
        <topology evidence="1">Lipid-anchor</topology>
        <orientation evidence="1">Cytoplasmic side</orientation>
    </subcellularLocation>
    <subcellularLocation>
        <location evidence="1">Virion</location>
    </subcellularLocation>
    <subcellularLocation>
        <location evidence="1">Secreted</location>
    </subcellularLocation>
    <subcellularLocation>
        <location evidence="1">Host Golgi apparatus membrane</location>
    </subcellularLocation>
    <text evidence="1">TGN localization requires PACS1. Associates with the inner plasma membrane through its N-terminal domain. Nef stimulates its own export via the release of exosomes. Incorporated in virions at a rate of about 10 molecules per virion, where it is cleaved.</text>
</comment>
<comment type="induction">
    <text evidence="1">Expressed early in the viral replication cycle.</text>
</comment>
<comment type="domain">
    <text evidence="1">The N-terminal domain is composed of the N-myristoyl glycine and of a cluster of positively charged amino acids. It is required for inner plasma membrane targeting of Nef and virion incorporation, and thereby for infectivity. This domain is also involved in binding to TP53.</text>
</comment>
<comment type="domain">
    <text evidence="1">The SH3-binding domain constituted of PxxP motifs mediates binding to several Src family proteins thereby regulating their tyrosine kinase activity. The same motifs also mediates the association with MAPK3, PI3-kinase and TCR-zeta.</text>
</comment>
<comment type="domain">
    <text evidence="1">The dileucine internalization motif and a diacidic motif seem to be required for binding to AP-2.</text>
</comment>
<comment type="domain">
    <text evidence="1">The acidic region binds to the sorting protein PACS-2, which targets Nef to the paranuclear region, enabling the PxxP motif to direct assembly of an SFK/ZAP-70/PI3K complex that accelerates endocytosis of cell-surface MHC-I.</text>
</comment>
<comment type="PTM">
    <text evidence="1">The virion-associated Nef proteins are cleaved by the viral protease to release the soluble C-terminal core protein. Nef is probably cleaved concomitantly with viral structural proteins on maturation of virus particles.</text>
</comment>
<comment type="PTM">
    <text evidence="1">Myristoylated.</text>
</comment>
<comment type="PTM">
    <text evidence="1">Phosphorylated on serine residues, probably by host PKCdelta and theta.</text>
</comment>
<comment type="miscellaneous">
    <text evidence="1">HIV-1 lineages are divided in three main groups, M (for Major), O (for Outlier), and N (for New, or Non-M, Non-O). The vast majority of strains found worldwide belong to the group M. Group O seems to be endemic to and largely confined to Cameroon and neighboring countries in West Central Africa, where these viruses represent a small minority of HIV-1 strains. The group N is represented by a limited number of isolates from Cameroonian persons. The group M is further subdivided in 9 clades or subtypes (A to D, F to H, J and K).</text>
</comment>
<comment type="similarity">
    <text evidence="1">Belongs to the lentivirus primate group Nef protein family.</text>
</comment>
<sequence length="204" mass="23122">MGNKWSKSWPQVRDRMRRAAPAPAADGVGAVSQDLAKHGAITSSNTAATNDDCAWLEAQTEEEVGFPVRPQVPLRPMTYKGAFDLSFFLKEKGGLDGLIYSKKRQEILDLWVHNTQGYFPDWQNYTPGPGTXYPLTFGWCFKLVPVDPSEVEEANEGENNCLLHPACQHGIEDEEREVLKWKFDSSLARRHIARELHPEFYKDC</sequence>
<keyword id="KW-0014">AIDS</keyword>
<keyword id="KW-0053">Apoptosis</keyword>
<keyword id="KW-0244">Early protein</keyword>
<keyword id="KW-1032">Host cell membrane</keyword>
<keyword id="KW-1040">Host Golgi apparatus</keyword>
<keyword id="KW-1043">Host membrane</keyword>
<keyword id="KW-0945">Host-virus interaction</keyword>
<keyword id="KW-1080">Inhibition of host adaptive immune response by virus</keyword>
<keyword id="KW-1083">Inhibition of host autophagy by virus</keyword>
<keyword id="KW-1115">Inhibition of host MHC class I molecule presentation by virus</keyword>
<keyword id="KW-1116">Inhibition of host MHC class II molecule presentation by virus</keyword>
<keyword id="KW-0449">Lipoprotein</keyword>
<keyword id="KW-0472">Membrane</keyword>
<keyword id="KW-0519">Myristate</keyword>
<keyword id="KW-0597">Phosphoprotein</keyword>
<keyword id="KW-0964">Secreted</keyword>
<keyword id="KW-0729">SH3-binding</keyword>
<keyword id="KW-0899">Viral immunoevasion</keyword>
<keyword id="KW-0946">Virion</keyword>
<keyword id="KW-0843">Virulence</keyword>
<evidence type="ECO:0000255" key="1">
    <source>
        <dbReference type="HAMAP-Rule" id="MF_04078"/>
    </source>
</evidence>
<evidence type="ECO:0000256" key="2">
    <source>
        <dbReference type="SAM" id="MobiDB-lite"/>
    </source>
</evidence>
<organism>
    <name type="scientific">Human immunodeficiency virus type 1 group M subtype J (isolate SE9173)</name>
    <name type="common">HIV-1</name>
    <dbReference type="NCBI Taxonomy" id="388904"/>
    <lineage>
        <taxon>Viruses</taxon>
        <taxon>Riboviria</taxon>
        <taxon>Pararnavirae</taxon>
        <taxon>Artverviricota</taxon>
        <taxon>Revtraviricetes</taxon>
        <taxon>Ortervirales</taxon>
        <taxon>Retroviridae</taxon>
        <taxon>Orthoretrovirinae</taxon>
        <taxon>Lentivirus</taxon>
        <taxon>Human immunodeficiency virus type 1</taxon>
    </lineage>
</organism>
<gene>
    <name evidence="1" type="primary">nef</name>
</gene>
<accession>Q9WC70</accession>
<dbReference type="EMBL" id="AF082395">
    <property type="protein sequence ID" value="AAD17771.1"/>
    <property type="molecule type" value="Genomic_DNA"/>
</dbReference>
<dbReference type="Proteomes" id="UP000123434">
    <property type="component" value="Segment"/>
</dbReference>
<dbReference type="GO" id="GO:0005576">
    <property type="term" value="C:extracellular region"/>
    <property type="evidence" value="ECO:0007669"/>
    <property type="project" value="UniProtKB-SubCell"/>
</dbReference>
<dbReference type="GO" id="GO:0044178">
    <property type="term" value="C:host cell Golgi membrane"/>
    <property type="evidence" value="ECO:0007669"/>
    <property type="project" value="UniProtKB-SubCell"/>
</dbReference>
<dbReference type="GO" id="GO:0020002">
    <property type="term" value="C:host cell plasma membrane"/>
    <property type="evidence" value="ECO:0007669"/>
    <property type="project" value="UniProtKB-SubCell"/>
</dbReference>
<dbReference type="GO" id="GO:0016020">
    <property type="term" value="C:membrane"/>
    <property type="evidence" value="ECO:0007669"/>
    <property type="project" value="UniProtKB-UniRule"/>
</dbReference>
<dbReference type="GO" id="GO:0044423">
    <property type="term" value="C:virion component"/>
    <property type="evidence" value="ECO:0007669"/>
    <property type="project" value="UniProtKB-UniRule"/>
</dbReference>
<dbReference type="GO" id="GO:0005525">
    <property type="term" value="F:GTP binding"/>
    <property type="evidence" value="ECO:0007669"/>
    <property type="project" value="UniProtKB-UniRule"/>
</dbReference>
<dbReference type="GO" id="GO:0017124">
    <property type="term" value="F:SH3 domain binding"/>
    <property type="evidence" value="ECO:0007669"/>
    <property type="project" value="UniProtKB-UniRule"/>
</dbReference>
<dbReference type="GO" id="GO:0046776">
    <property type="term" value="P:symbiont-mediated suppression of host antigen processing and presentation of peptide antigen via MHC class I"/>
    <property type="evidence" value="ECO:0007669"/>
    <property type="project" value="UniProtKB-UniRule"/>
</dbReference>
<dbReference type="GO" id="GO:0039505">
    <property type="term" value="P:symbiont-mediated suppression of host antigen processing and presentation of peptide antigen via MHC class II"/>
    <property type="evidence" value="ECO:0007669"/>
    <property type="project" value="UniProtKB-UniRule"/>
</dbReference>
<dbReference type="GO" id="GO:0140321">
    <property type="term" value="P:symbiont-mediated suppression of host autophagy"/>
    <property type="evidence" value="ECO:0007669"/>
    <property type="project" value="UniProtKB-KW"/>
</dbReference>
<dbReference type="Gene3D" id="4.10.890.10">
    <property type="entry name" value="HIV 1 nef anchor domain"/>
    <property type="match status" value="1"/>
</dbReference>
<dbReference type="Gene3D" id="3.30.62.10">
    <property type="entry name" value="Nef Regulatory Factor"/>
    <property type="match status" value="1"/>
</dbReference>
<dbReference type="HAMAP" id="MF_04078">
    <property type="entry name" value="NEF_HIV"/>
    <property type="match status" value="1"/>
</dbReference>
<dbReference type="InterPro" id="IPR027480">
    <property type="entry name" value="HIV-1_Nef_anchor_sf"/>
</dbReference>
<dbReference type="InterPro" id="IPR027481">
    <property type="entry name" value="HIV-1_Nef_core_sf"/>
</dbReference>
<dbReference type="InterPro" id="IPR001558">
    <property type="entry name" value="HIV_Nef"/>
</dbReference>
<dbReference type="Pfam" id="PF00469">
    <property type="entry name" value="F-protein"/>
    <property type="match status" value="1"/>
</dbReference>
<dbReference type="SUPFAM" id="SSF55671">
    <property type="entry name" value="Regulatory factor Nef"/>
    <property type="match status" value="1"/>
</dbReference>
<name>NEF_HV1S9</name>
<proteinExistence type="inferred from homology"/>
<reference key="1">
    <citation type="journal article" date="1999" name="AIDS Res. Hum. Retroviruses">
        <title>Virtually full-length sequences of HIV type 1 subtype J reference strains.</title>
        <authorList>
            <person name="Laukkanen T."/>
            <person name="Albert J."/>
            <person name="Liitsola K."/>
            <person name="Green S.D."/>
            <person name="Carr J.K."/>
            <person name="Leitner T."/>
            <person name="McCutchan F.E."/>
            <person name="Salminen M.O."/>
        </authorList>
    </citation>
    <scope>NUCLEOTIDE SEQUENCE [GENOMIC DNA]</scope>
</reference>
<feature type="initiator methionine" description="Removed; by host" evidence="1">
    <location>
        <position position="1"/>
    </location>
</feature>
<feature type="chain" id="PRO_0000244805" description="Protein Nef" evidence="1">
    <location>
        <begin position="2"/>
        <end position="204"/>
    </location>
</feature>
<feature type="chain" id="PRO_0000244806" description="C-terminal core protein" evidence="1">
    <location>
        <begin position="56"/>
        <end position="204"/>
    </location>
</feature>
<feature type="region of interest" description="Disordered" evidence="2">
    <location>
        <begin position="1"/>
        <end position="27"/>
    </location>
</feature>
<feature type="region of interest" description="Acidic; interacts with host PACS1 and PACS2; stabilizes the interaction of NEF/MHC-I with host AP1M1; necessary for MHC-I internalization" evidence="1">
    <location>
        <begin position="60"/>
        <end position="63"/>
    </location>
</feature>
<feature type="region of interest" description="SH3-binding; interaction with Src family tyrosine kinases" evidence="1">
    <location>
        <begin position="67"/>
        <end position="76"/>
    </location>
</feature>
<feature type="region of interest" description="Mediates dimerization, Nef-PTE1 interaction" evidence="1">
    <location>
        <begin position="106"/>
        <end position="122"/>
    </location>
</feature>
<feature type="region of interest" description="Binding to ATP6V1H" evidence="1">
    <location>
        <begin position="146"/>
        <end position="178"/>
    </location>
</feature>
<feature type="short sequence motif" description="PxxP; stabilizes the interaction of NEF/MHC-I with host AP1M1; necessary for MHC-I internalization" evidence="1">
    <location>
        <begin position="70"/>
        <end position="73"/>
    </location>
</feature>
<feature type="short sequence motif" description="Dileucine internalization motif; necessary for CD4 internalization" evidence="1">
    <location>
        <begin position="162"/>
        <end position="163"/>
    </location>
</feature>
<feature type="short sequence motif" description="Diacidic; necessary for CD4 internalization" evidence="1">
    <location>
        <begin position="172"/>
        <end position="173"/>
    </location>
</feature>
<feature type="site" description="Might play a role in AP-1 recruitment to the Nef-MHC-I complex" evidence="1">
    <location>
        <position position="16"/>
    </location>
</feature>
<feature type="site" description="Cleavage; by viral protease" evidence="1">
    <location>
        <begin position="55"/>
        <end position="56"/>
    </location>
</feature>
<feature type="modified residue" description="Phosphoserine; by host" evidence="1">
    <location>
        <position position="6"/>
    </location>
</feature>
<feature type="lipid moiety-binding region" description="N-myristoyl glycine; by host" evidence="1">
    <location>
        <position position="2"/>
    </location>
</feature>
<protein>
    <recommendedName>
        <fullName evidence="1">Protein Nef</fullName>
    </recommendedName>
    <alternativeName>
        <fullName evidence="1">3'ORF</fullName>
    </alternativeName>
    <alternativeName>
        <fullName evidence="1">Negative factor</fullName>
        <shortName evidence="1">F-protein</shortName>
    </alternativeName>
    <component>
        <recommendedName>
            <fullName evidence="1">C-terminal core protein</fullName>
        </recommendedName>
    </component>
</protein>